<accession>A7MKG5</accession>
<reference key="1">
    <citation type="journal article" date="2010" name="PLoS ONE">
        <title>Genome sequence of Cronobacter sakazakii BAA-894 and comparative genomic hybridization analysis with other Cronobacter species.</title>
        <authorList>
            <person name="Kucerova E."/>
            <person name="Clifton S.W."/>
            <person name="Xia X.Q."/>
            <person name="Long F."/>
            <person name="Porwollik S."/>
            <person name="Fulton L."/>
            <person name="Fronick C."/>
            <person name="Minx P."/>
            <person name="Kyung K."/>
            <person name="Warren W."/>
            <person name="Fulton R."/>
            <person name="Feng D."/>
            <person name="Wollam A."/>
            <person name="Shah N."/>
            <person name="Bhonagiri V."/>
            <person name="Nash W.E."/>
            <person name="Hallsworth-Pepin K."/>
            <person name="Wilson R.K."/>
            <person name="McClelland M."/>
            <person name="Forsythe S.J."/>
        </authorList>
    </citation>
    <scope>NUCLEOTIDE SEQUENCE [LARGE SCALE GENOMIC DNA]</scope>
    <source>
        <strain>ATCC BAA-894</strain>
    </source>
</reference>
<sequence>MMRIALFLLTNLAVMVVFGLVLSLTGIQSSSVTGLLIMALLFGFGGSIVSLLMSKWMALKSVGGEVIEAPRNETERWLMDTVAQQSRQAGIAMPQVAIYHAPDINAFATGARRDASLVAVSTGLLQNMSRDEAEAVIAHEISHIANGDMVTMTLIQGVVNTFVIFISRIIAQVAAGFLGGNRDEGEESNGNPLIYFAVATVLELVFGILASIITMWFSRYREFHADAGSAKLVGREKMIAALQRLKTSYEPQEASSMMAFCINGKSKSLSELFMTHPPLDKRIEALRSGEYLK</sequence>
<comment type="cofactor">
    <cofactor evidence="1">
        <name>Zn(2+)</name>
        <dbReference type="ChEBI" id="CHEBI:29105"/>
    </cofactor>
    <text evidence="1">Binds 1 zinc ion per subunit.</text>
</comment>
<comment type="subcellular location">
    <subcellularLocation>
        <location evidence="1">Cell inner membrane</location>
        <topology evidence="1">Multi-pass membrane protein</topology>
    </subcellularLocation>
</comment>
<comment type="similarity">
    <text evidence="1">Belongs to the peptidase M48B family.</text>
</comment>
<protein>
    <recommendedName>
        <fullName evidence="1">Protease HtpX</fullName>
        <ecNumber evidence="1">3.4.24.-</ecNumber>
    </recommendedName>
    <alternativeName>
        <fullName evidence="1">Heat shock protein HtpX</fullName>
    </alternativeName>
</protein>
<evidence type="ECO:0000255" key="1">
    <source>
        <dbReference type="HAMAP-Rule" id="MF_00188"/>
    </source>
</evidence>
<proteinExistence type="inferred from homology"/>
<dbReference type="EC" id="3.4.24.-" evidence="1"/>
<dbReference type="EMBL" id="CP000783">
    <property type="protein sequence ID" value="ABU76679.1"/>
    <property type="molecule type" value="Genomic_DNA"/>
</dbReference>
<dbReference type="RefSeq" id="WP_004386682.1">
    <property type="nucleotide sequence ID" value="NC_009778.1"/>
</dbReference>
<dbReference type="SMR" id="A7MKG5"/>
<dbReference type="MEROPS" id="M48.002"/>
<dbReference type="GeneID" id="92212722"/>
<dbReference type="KEGG" id="esa:ESA_01421"/>
<dbReference type="HOGENOM" id="CLU_042266_1_0_6"/>
<dbReference type="Proteomes" id="UP000000260">
    <property type="component" value="Chromosome"/>
</dbReference>
<dbReference type="GO" id="GO:0005886">
    <property type="term" value="C:plasma membrane"/>
    <property type="evidence" value="ECO:0007669"/>
    <property type="project" value="UniProtKB-SubCell"/>
</dbReference>
<dbReference type="GO" id="GO:0004222">
    <property type="term" value="F:metalloendopeptidase activity"/>
    <property type="evidence" value="ECO:0007669"/>
    <property type="project" value="UniProtKB-UniRule"/>
</dbReference>
<dbReference type="GO" id="GO:0008270">
    <property type="term" value="F:zinc ion binding"/>
    <property type="evidence" value="ECO:0007669"/>
    <property type="project" value="UniProtKB-UniRule"/>
</dbReference>
<dbReference type="GO" id="GO:0006508">
    <property type="term" value="P:proteolysis"/>
    <property type="evidence" value="ECO:0007669"/>
    <property type="project" value="UniProtKB-KW"/>
</dbReference>
<dbReference type="CDD" id="cd07335">
    <property type="entry name" value="M48B_HtpX_like"/>
    <property type="match status" value="1"/>
</dbReference>
<dbReference type="FunFam" id="3.30.2010.10:FF:000001">
    <property type="entry name" value="Protease HtpX"/>
    <property type="match status" value="1"/>
</dbReference>
<dbReference type="Gene3D" id="3.30.2010.10">
    <property type="entry name" value="Metalloproteases ('zincins'), catalytic domain"/>
    <property type="match status" value="1"/>
</dbReference>
<dbReference type="HAMAP" id="MF_00188">
    <property type="entry name" value="Pept_M48_protease_HtpX"/>
    <property type="match status" value="1"/>
</dbReference>
<dbReference type="InterPro" id="IPR050083">
    <property type="entry name" value="HtpX_protease"/>
</dbReference>
<dbReference type="InterPro" id="IPR022919">
    <property type="entry name" value="Pept_M48_protease_HtpX"/>
</dbReference>
<dbReference type="InterPro" id="IPR001915">
    <property type="entry name" value="Peptidase_M48"/>
</dbReference>
<dbReference type="NCBIfam" id="NF003965">
    <property type="entry name" value="PRK05457.1"/>
    <property type="match status" value="1"/>
</dbReference>
<dbReference type="PANTHER" id="PTHR43221">
    <property type="entry name" value="PROTEASE HTPX"/>
    <property type="match status" value="1"/>
</dbReference>
<dbReference type="PANTHER" id="PTHR43221:SF1">
    <property type="entry name" value="PROTEASE HTPX"/>
    <property type="match status" value="1"/>
</dbReference>
<dbReference type="Pfam" id="PF01435">
    <property type="entry name" value="Peptidase_M48"/>
    <property type="match status" value="1"/>
</dbReference>
<keyword id="KW-0997">Cell inner membrane</keyword>
<keyword id="KW-1003">Cell membrane</keyword>
<keyword id="KW-0378">Hydrolase</keyword>
<keyword id="KW-0472">Membrane</keyword>
<keyword id="KW-0479">Metal-binding</keyword>
<keyword id="KW-0482">Metalloprotease</keyword>
<keyword id="KW-0645">Protease</keyword>
<keyword id="KW-1185">Reference proteome</keyword>
<keyword id="KW-0812">Transmembrane</keyword>
<keyword id="KW-1133">Transmembrane helix</keyword>
<keyword id="KW-0862">Zinc</keyword>
<feature type="chain" id="PRO_1000020865" description="Protease HtpX">
    <location>
        <begin position="1"/>
        <end position="293"/>
    </location>
</feature>
<feature type="transmembrane region" description="Helical" evidence="1">
    <location>
        <begin position="4"/>
        <end position="24"/>
    </location>
</feature>
<feature type="transmembrane region" description="Helical" evidence="1">
    <location>
        <begin position="32"/>
        <end position="52"/>
    </location>
</feature>
<feature type="transmembrane region" description="Helical" evidence="1">
    <location>
        <begin position="158"/>
        <end position="178"/>
    </location>
</feature>
<feature type="transmembrane region" description="Helical" evidence="1">
    <location>
        <begin position="193"/>
        <end position="213"/>
    </location>
</feature>
<feature type="active site" evidence="1">
    <location>
        <position position="140"/>
    </location>
</feature>
<feature type="binding site" evidence="1">
    <location>
        <position position="139"/>
    </location>
    <ligand>
        <name>Zn(2+)</name>
        <dbReference type="ChEBI" id="CHEBI:29105"/>
        <note>catalytic</note>
    </ligand>
</feature>
<feature type="binding site" evidence="1">
    <location>
        <position position="143"/>
    </location>
    <ligand>
        <name>Zn(2+)</name>
        <dbReference type="ChEBI" id="CHEBI:29105"/>
        <note>catalytic</note>
    </ligand>
</feature>
<feature type="binding site" evidence="1">
    <location>
        <position position="222"/>
    </location>
    <ligand>
        <name>Zn(2+)</name>
        <dbReference type="ChEBI" id="CHEBI:29105"/>
        <note>catalytic</note>
    </ligand>
</feature>
<organism>
    <name type="scientific">Cronobacter sakazakii (strain ATCC BAA-894)</name>
    <name type="common">Enterobacter sakazakii</name>
    <dbReference type="NCBI Taxonomy" id="290339"/>
    <lineage>
        <taxon>Bacteria</taxon>
        <taxon>Pseudomonadati</taxon>
        <taxon>Pseudomonadota</taxon>
        <taxon>Gammaproteobacteria</taxon>
        <taxon>Enterobacterales</taxon>
        <taxon>Enterobacteriaceae</taxon>
        <taxon>Cronobacter</taxon>
    </lineage>
</organism>
<gene>
    <name evidence="1" type="primary">htpX</name>
    <name type="ordered locus">ESA_01421</name>
</gene>
<name>HTPX_CROS8</name>